<protein>
    <recommendedName>
        <fullName evidence="3">Small ribosomal subunit protein eS28B</fullName>
    </recommendedName>
    <alternativeName>
        <fullName>40S ribosomal protein S28-B</fullName>
    </alternativeName>
    <alternativeName>
        <fullName>S33</fullName>
    </alternativeName>
</protein>
<gene>
    <name type="primary">rps2802</name>
    <name type="synonym">rps28b</name>
    <name type="ORF">SPCC285.15c</name>
</gene>
<accession>P0CT80</accession>
<accession>Q10421</accession>
<sequence>MDSSKVPVKLAKVIKVLGRTGSRGGVTQVRVEFMDDTSRSIIRNVKGPVREDDILVLLESEREARRLR</sequence>
<proteinExistence type="inferred from homology"/>
<keyword id="KW-0963">Cytoplasm</keyword>
<keyword id="KW-1185">Reference proteome</keyword>
<keyword id="KW-0687">Ribonucleoprotein</keyword>
<keyword id="KW-0689">Ribosomal protein</keyword>
<name>RS28B_SCHPO</name>
<evidence type="ECO:0000250" key="1">
    <source>
        <dbReference type="UniProtKB" id="P0C0X0"/>
    </source>
</evidence>
<evidence type="ECO:0000269" key="2">
    <source>
    </source>
</evidence>
<evidence type="ECO:0000305" key="3"/>
<reference key="1">
    <citation type="journal article" date="2002" name="Nature">
        <title>The genome sequence of Schizosaccharomyces pombe.</title>
        <authorList>
            <person name="Wood V."/>
            <person name="Gwilliam R."/>
            <person name="Rajandream M.A."/>
            <person name="Lyne M.H."/>
            <person name="Lyne R."/>
            <person name="Stewart A."/>
            <person name="Sgouros J.G."/>
            <person name="Peat N."/>
            <person name="Hayles J."/>
            <person name="Baker S.G."/>
            <person name="Basham D."/>
            <person name="Bowman S."/>
            <person name="Brooks K."/>
            <person name="Brown D."/>
            <person name="Brown S."/>
            <person name="Chillingworth T."/>
            <person name="Churcher C.M."/>
            <person name="Collins M."/>
            <person name="Connor R."/>
            <person name="Cronin A."/>
            <person name="Davis P."/>
            <person name="Feltwell T."/>
            <person name="Fraser A."/>
            <person name="Gentles S."/>
            <person name="Goble A."/>
            <person name="Hamlin N."/>
            <person name="Harris D.E."/>
            <person name="Hidalgo J."/>
            <person name="Hodgson G."/>
            <person name="Holroyd S."/>
            <person name="Hornsby T."/>
            <person name="Howarth S."/>
            <person name="Huckle E.J."/>
            <person name="Hunt S."/>
            <person name="Jagels K."/>
            <person name="James K.D."/>
            <person name="Jones L."/>
            <person name="Jones M."/>
            <person name="Leather S."/>
            <person name="McDonald S."/>
            <person name="McLean J."/>
            <person name="Mooney P."/>
            <person name="Moule S."/>
            <person name="Mungall K.L."/>
            <person name="Murphy L.D."/>
            <person name="Niblett D."/>
            <person name="Odell C."/>
            <person name="Oliver K."/>
            <person name="O'Neil S."/>
            <person name="Pearson D."/>
            <person name="Quail M.A."/>
            <person name="Rabbinowitsch E."/>
            <person name="Rutherford K.M."/>
            <person name="Rutter S."/>
            <person name="Saunders D."/>
            <person name="Seeger K."/>
            <person name="Sharp S."/>
            <person name="Skelton J."/>
            <person name="Simmonds M.N."/>
            <person name="Squares R."/>
            <person name="Squares S."/>
            <person name="Stevens K."/>
            <person name="Taylor K."/>
            <person name="Taylor R.G."/>
            <person name="Tivey A."/>
            <person name="Walsh S.V."/>
            <person name="Warren T."/>
            <person name="Whitehead S."/>
            <person name="Woodward J.R."/>
            <person name="Volckaert G."/>
            <person name="Aert R."/>
            <person name="Robben J."/>
            <person name="Grymonprez B."/>
            <person name="Weltjens I."/>
            <person name="Vanstreels E."/>
            <person name="Rieger M."/>
            <person name="Schaefer M."/>
            <person name="Mueller-Auer S."/>
            <person name="Gabel C."/>
            <person name="Fuchs M."/>
            <person name="Duesterhoeft A."/>
            <person name="Fritzc C."/>
            <person name="Holzer E."/>
            <person name="Moestl D."/>
            <person name="Hilbert H."/>
            <person name="Borzym K."/>
            <person name="Langer I."/>
            <person name="Beck A."/>
            <person name="Lehrach H."/>
            <person name="Reinhardt R."/>
            <person name="Pohl T.M."/>
            <person name="Eger P."/>
            <person name="Zimmermann W."/>
            <person name="Wedler H."/>
            <person name="Wambutt R."/>
            <person name="Purnelle B."/>
            <person name="Goffeau A."/>
            <person name="Cadieu E."/>
            <person name="Dreano S."/>
            <person name="Gloux S."/>
            <person name="Lelaure V."/>
            <person name="Mottier S."/>
            <person name="Galibert F."/>
            <person name="Aves S.J."/>
            <person name="Xiang Z."/>
            <person name="Hunt C."/>
            <person name="Moore K."/>
            <person name="Hurst S.M."/>
            <person name="Lucas M."/>
            <person name="Rochet M."/>
            <person name="Gaillardin C."/>
            <person name="Tallada V.A."/>
            <person name="Garzon A."/>
            <person name="Thode G."/>
            <person name="Daga R.R."/>
            <person name="Cruzado L."/>
            <person name="Jimenez J."/>
            <person name="Sanchez M."/>
            <person name="del Rey F."/>
            <person name="Benito J."/>
            <person name="Dominguez A."/>
            <person name="Revuelta J.L."/>
            <person name="Moreno S."/>
            <person name="Armstrong J."/>
            <person name="Forsburg S.L."/>
            <person name="Cerutti L."/>
            <person name="Lowe T."/>
            <person name="McCombie W.R."/>
            <person name="Paulsen I."/>
            <person name="Potashkin J."/>
            <person name="Shpakovski G.V."/>
            <person name="Ussery D."/>
            <person name="Barrell B.G."/>
            <person name="Nurse P."/>
        </authorList>
    </citation>
    <scope>NUCLEOTIDE SEQUENCE [LARGE SCALE GENOMIC DNA]</scope>
    <source>
        <strain>972 / ATCC 24843</strain>
    </source>
</reference>
<reference key="2">
    <citation type="submission" date="1996-05" db="EMBL/GenBank/DDBJ databases">
        <authorList>
            <person name="Kawamukai M."/>
        </authorList>
    </citation>
    <scope>NUCLEOTIDE SEQUENCE [MRNA] OF 8-68</scope>
</reference>
<reference key="3">
    <citation type="journal article" date="2006" name="Nat. Biotechnol.">
        <title>ORFeome cloning and global analysis of protein localization in the fission yeast Schizosaccharomyces pombe.</title>
        <authorList>
            <person name="Matsuyama A."/>
            <person name="Arai R."/>
            <person name="Yashiroda Y."/>
            <person name="Shirai A."/>
            <person name="Kamata A."/>
            <person name="Sekido S."/>
            <person name="Kobayashi Y."/>
            <person name="Hashimoto A."/>
            <person name="Hamamoto M."/>
            <person name="Hiraoka Y."/>
            <person name="Horinouchi S."/>
            <person name="Yoshida M."/>
        </authorList>
    </citation>
    <scope>SUBCELLULAR LOCATION [LARGE SCALE ANALYSIS]</scope>
</reference>
<organism>
    <name type="scientific">Schizosaccharomyces pombe (strain 972 / ATCC 24843)</name>
    <name type="common">Fission yeast</name>
    <dbReference type="NCBI Taxonomy" id="284812"/>
    <lineage>
        <taxon>Eukaryota</taxon>
        <taxon>Fungi</taxon>
        <taxon>Dikarya</taxon>
        <taxon>Ascomycota</taxon>
        <taxon>Taphrinomycotina</taxon>
        <taxon>Schizosaccharomycetes</taxon>
        <taxon>Schizosaccharomycetales</taxon>
        <taxon>Schizosaccharomycetaceae</taxon>
        <taxon>Schizosaccharomyces</taxon>
    </lineage>
</organism>
<comment type="function">
    <text evidence="1">Component of the ribosome, a large ribonucleoprotein complex responsible for the synthesis of proteins in the cell. The small ribosomal subunit (SSU) binds messenger RNAs (mRNAs) and translates the encoded message by selecting cognate aminoacyl-transfer RNA (tRNA) molecules. The large subunit (LSU) contains the ribosomal catalytic site termed the peptidyl transferase center (PTC), which catalyzes the formation of peptide bonds, thereby polymerizing the amino acids delivered by tRNAs into a polypeptide chain. The nascent polypeptides leave the ribosome through a tunnel in the LSU and interact with protein factors that function in enzymatic processing, targeting, and the membrane insertion of nascent chains at the exit of the ribosomal tunnel.</text>
</comment>
<comment type="subunit">
    <text evidence="1">Component of the small ribosomal subunit (SSU). Mature yeast ribosomes consist of a small (40S) and a large (60S) subunit. The 40S small subunit contains 1 molecule of ribosomal RNA (18S rRNA) and at least 33 different proteins. The large 60S subunit contains 3 rRNA molecules (25S, 5.8S and 5S rRNA) and at least 46 different proteins.</text>
</comment>
<comment type="subcellular location">
    <subcellularLocation>
        <location evidence="2">Cytoplasm</location>
    </subcellularLocation>
</comment>
<comment type="miscellaneous">
    <text>There are 2 genes for eS28 in S.pombe.</text>
</comment>
<comment type="similarity">
    <text evidence="3">Belongs to the eukaryotic ribosomal protein eS28 family.</text>
</comment>
<dbReference type="EMBL" id="CU329672">
    <property type="protein sequence ID" value="CAA20854.1"/>
    <property type="molecule type" value="Genomic_DNA"/>
</dbReference>
<dbReference type="EMBL" id="D85030">
    <property type="protein sequence ID" value="BAA12712.1"/>
    <property type="molecule type" value="mRNA"/>
</dbReference>
<dbReference type="PIR" id="T38377">
    <property type="entry name" value="T38377"/>
</dbReference>
<dbReference type="PIR" id="T45114">
    <property type="entry name" value="T45114"/>
</dbReference>
<dbReference type="RefSeq" id="NP_588343.1">
    <property type="nucleotide sequence ID" value="NM_001023334.2"/>
</dbReference>
<dbReference type="SMR" id="P0CT80"/>
<dbReference type="FunCoup" id="P0CT80">
    <property type="interactions" value="411"/>
</dbReference>
<dbReference type="STRING" id="284812.P0CT80"/>
<dbReference type="iPTMnet" id="P0CT80"/>
<dbReference type="EnsemblFungi" id="SPAC25G10.06.1">
    <property type="protein sequence ID" value="SPAC25G10.06.1:pep"/>
    <property type="gene ID" value="SPAC25G10.06"/>
</dbReference>
<dbReference type="EnsemblFungi" id="SPCC285.15c.1">
    <property type="protein sequence ID" value="SPCC285.15c.1:pep"/>
    <property type="gene ID" value="SPCC285.15c"/>
</dbReference>
<dbReference type="GeneID" id="2539085"/>
<dbReference type="KEGG" id="spo:2539085"/>
<dbReference type="KEGG" id="spo:2542751"/>
<dbReference type="PomBase" id="SPCC285.15c">
    <property type="gene designation" value="rps2802"/>
</dbReference>
<dbReference type="VEuPathDB" id="FungiDB:SPAC25G10.06"/>
<dbReference type="VEuPathDB" id="FungiDB:SPCC285.15c"/>
<dbReference type="InParanoid" id="P0CT80"/>
<dbReference type="OMA" id="NTGMHGE"/>
<dbReference type="PhylomeDB" id="P0CT80"/>
<dbReference type="Reactome" id="R-SPO-156827">
    <property type="pathway name" value="L13a-mediated translational silencing of Ceruloplasmin expression"/>
</dbReference>
<dbReference type="Reactome" id="R-SPO-1799339">
    <property type="pathway name" value="SRP-dependent cotranslational protein targeting to membrane"/>
</dbReference>
<dbReference type="Reactome" id="R-SPO-72649">
    <property type="pathway name" value="Translation initiation complex formation"/>
</dbReference>
<dbReference type="Reactome" id="R-SPO-72689">
    <property type="pathway name" value="Formation of a pool of free 40S subunits"/>
</dbReference>
<dbReference type="Reactome" id="R-SPO-72695">
    <property type="pathway name" value="Formation of the ternary complex, and subsequently, the 43S complex"/>
</dbReference>
<dbReference type="Reactome" id="R-SPO-72702">
    <property type="pathway name" value="Ribosomal scanning and start codon recognition"/>
</dbReference>
<dbReference type="Reactome" id="R-SPO-72706">
    <property type="pathway name" value="GTP hydrolysis and joining of the 60S ribosomal subunit"/>
</dbReference>
<dbReference type="Reactome" id="R-SPO-975956">
    <property type="pathway name" value="Nonsense Mediated Decay (NMD) independent of the Exon Junction Complex (EJC)"/>
</dbReference>
<dbReference type="Reactome" id="R-SPO-975957">
    <property type="pathway name" value="Nonsense Mediated Decay (NMD) enhanced by the Exon Junction Complex (EJC)"/>
</dbReference>
<dbReference type="PRO" id="PR:P0CT80"/>
<dbReference type="Proteomes" id="UP000002485">
    <property type="component" value="Chromosome III"/>
</dbReference>
<dbReference type="GO" id="GO:0005829">
    <property type="term" value="C:cytosol"/>
    <property type="evidence" value="ECO:0007005"/>
    <property type="project" value="PomBase"/>
</dbReference>
<dbReference type="GO" id="GO:0022627">
    <property type="term" value="C:cytosolic small ribosomal subunit"/>
    <property type="evidence" value="ECO:0000318"/>
    <property type="project" value="GO_Central"/>
</dbReference>
<dbReference type="GO" id="GO:0005730">
    <property type="term" value="C:nucleolus"/>
    <property type="evidence" value="ECO:0000314"/>
    <property type="project" value="PomBase"/>
</dbReference>
<dbReference type="GO" id="GO:0003735">
    <property type="term" value="F:structural constituent of ribosome"/>
    <property type="evidence" value="ECO:0000318"/>
    <property type="project" value="GO_Central"/>
</dbReference>
<dbReference type="GO" id="GO:0002181">
    <property type="term" value="P:cytoplasmic translation"/>
    <property type="evidence" value="ECO:0000266"/>
    <property type="project" value="PomBase"/>
</dbReference>
<dbReference type="GO" id="GO:0030490">
    <property type="term" value="P:maturation of SSU-rRNA"/>
    <property type="evidence" value="ECO:0000315"/>
    <property type="project" value="PomBase"/>
</dbReference>
<dbReference type="GO" id="GO:0000028">
    <property type="term" value="P:ribosomal small subunit assembly"/>
    <property type="evidence" value="ECO:0000315"/>
    <property type="project" value="PomBase"/>
</dbReference>
<dbReference type="CDD" id="cd04457">
    <property type="entry name" value="S1_S28E"/>
    <property type="match status" value="1"/>
</dbReference>
<dbReference type="FunFam" id="2.40.50.140:FF:000025">
    <property type="entry name" value="40S ribosomal protein S28"/>
    <property type="match status" value="1"/>
</dbReference>
<dbReference type="Gene3D" id="2.40.50.140">
    <property type="entry name" value="Nucleic acid-binding proteins"/>
    <property type="match status" value="1"/>
</dbReference>
<dbReference type="HAMAP" id="MF_00292">
    <property type="entry name" value="Ribosomal_eS28"/>
    <property type="match status" value="1"/>
</dbReference>
<dbReference type="InterPro" id="IPR012340">
    <property type="entry name" value="NA-bd_OB-fold"/>
</dbReference>
<dbReference type="InterPro" id="IPR000289">
    <property type="entry name" value="Ribosomal_eS28"/>
</dbReference>
<dbReference type="InterPro" id="IPR028626">
    <property type="entry name" value="Ribosomal_eS28_CS"/>
</dbReference>
<dbReference type="PANTHER" id="PTHR10769">
    <property type="entry name" value="40S RIBOSOMAL PROTEIN S28"/>
    <property type="match status" value="1"/>
</dbReference>
<dbReference type="PANTHER" id="PTHR10769:SF3">
    <property type="entry name" value="SMALL RIBOSOMAL SUBUNIT PROTEIN ES28"/>
    <property type="match status" value="1"/>
</dbReference>
<dbReference type="Pfam" id="PF01200">
    <property type="entry name" value="Ribosomal_S28e"/>
    <property type="match status" value="1"/>
</dbReference>
<dbReference type="SUPFAM" id="SSF50249">
    <property type="entry name" value="Nucleic acid-binding proteins"/>
    <property type="match status" value="1"/>
</dbReference>
<dbReference type="PROSITE" id="PS00961">
    <property type="entry name" value="RIBOSOMAL_S28E"/>
    <property type="match status" value="1"/>
</dbReference>
<feature type="chain" id="PRO_0000433411" description="Small ribosomal subunit protein eS28B">
    <location>
        <begin position="1"/>
        <end position="68"/>
    </location>
</feature>
<feature type="sequence conflict" description="In Ref. 2; BAA12712." evidence="3" ref="2">
    <original>VK</original>
    <variation>TR</variation>
    <location>
        <begin position="8"/>
        <end position="9"/>
    </location>
</feature>